<feature type="signal peptide" evidence="2">
    <location>
        <begin position="1"/>
        <end position="31"/>
    </location>
</feature>
<feature type="chain" id="PRO_0000328968" description="MAM and LDL-receptor class A domain-containing protein 1">
    <location>
        <begin position="32"/>
        <end position="2156"/>
    </location>
</feature>
<feature type="topological domain" description="Vesicular" evidence="8">
    <location>
        <begin position="32"/>
        <end position="2076"/>
    </location>
</feature>
<feature type="transmembrane region" description="Helical" evidence="2">
    <location>
        <begin position="2077"/>
        <end position="2097"/>
    </location>
</feature>
<feature type="topological domain" description="Cytoplasmic" evidence="8">
    <location>
        <begin position="2098"/>
        <end position="2156"/>
    </location>
</feature>
<feature type="domain" description="LDL-receptor class A 1" evidence="4">
    <location>
        <begin position="33"/>
        <end position="68"/>
    </location>
</feature>
<feature type="domain" description="MAM 1" evidence="5">
    <location>
        <begin position="71"/>
        <end position="229"/>
    </location>
</feature>
<feature type="domain" description="MAM 2" evidence="5">
    <location>
        <begin position="268"/>
        <end position="427"/>
    </location>
</feature>
<feature type="domain" description="LDL-receptor class A 2" evidence="4">
    <location>
        <begin position="433"/>
        <end position="471"/>
    </location>
</feature>
<feature type="domain" description="MAM 3" evidence="5">
    <location>
        <begin position="474"/>
        <end position="637"/>
    </location>
</feature>
<feature type="domain" description="MAM 4" evidence="5">
    <location>
        <begin position="652"/>
        <end position="816"/>
    </location>
</feature>
<feature type="domain" description="LDL-receptor class A 3" evidence="4">
    <location>
        <begin position="822"/>
        <end position="860"/>
    </location>
</feature>
<feature type="domain" description="MAM 5" evidence="5">
    <location>
        <begin position="863"/>
        <end position="1024"/>
    </location>
</feature>
<feature type="domain" description="LDL-receptor class A 4" evidence="4">
    <location>
        <begin position="1049"/>
        <end position="1086"/>
    </location>
</feature>
<feature type="domain" description="MAM 6" evidence="5">
    <location>
        <begin position="1088"/>
        <end position="1256"/>
    </location>
</feature>
<feature type="domain" description="LDL-receptor class A 5" evidence="4">
    <location>
        <begin position="1263"/>
        <end position="1301"/>
    </location>
</feature>
<feature type="domain" description="MAM 7" evidence="5">
    <location>
        <begin position="1305"/>
        <end position="1465"/>
    </location>
</feature>
<feature type="domain" description="LDL-receptor class A 6" evidence="4">
    <location>
        <begin position="1482"/>
        <end position="1518"/>
    </location>
</feature>
<feature type="domain" description="MAM 8" evidence="5">
    <location>
        <begin position="1519"/>
        <end position="1676"/>
    </location>
</feature>
<feature type="domain" description="LDL-receptor class A 7" evidence="4">
    <location>
        <begin position="1683"/>
        <end position="1720"/>
    </location>
</feature>
<feature type="domain" description="MAM 9" evidence="5">
    <location>
        <begin position="1727"/>
        <end position="1892"/>
    </location>
</feature>
<feature type="domain" description="LDL-receptor class A 8" evidence="4">
    <location>
        <begin position="1902"/>
        <end position="1939"/>
    </location>
</feature>
<feature type="domain" description="LDL-receptor class A 9" evidence="4">
    <location>
        <begin position="1946"/>
        <end position="1982"/>
    </location>
</feature>
<feature type="domain" description="LDL-receptor class A 10" evidence="4">
    <location>
        <begin position="1985"/>
        <end position="2023"/>
    </location>
</feature>
<feature type="domain" description="EGF-like" evidence="3">
    <location>
        <begin position="2024"/>
        <end position="2057"/>
    </location>
</feature>
<feature type="glycosylation site" description="N-linked (GlcNAc...) asparagine" evidence="2">
    <location>
        <position position="813"/>
    </location>
</feature>
<feature type="glycosylation site" description="N-linked (GlcNAc...) asparagine" evidence="2">
    <location>
        <position position="1049"/>
    </location>
</feature>
<feature type="glycosylation site" description="N-linked (GlcNAc...) asparagine" evidence="2">
    <location>
        <position position="1199"/>
    </location>
</feature>
<feature type="glycosylation site" description="N-linked (GlcNAc...) asparagine" evidence="2">
    <location>
        <position position="1414"/>
    </location>
</feature>
<feature type="disulfide bond" evidence="4">
    <location>
        <begin position="40"/>
        <end position="58"/>
    </location>
</feature>
<feature type="disulfide bond" evidence="4">
    <location>
        <begin position="52"/>
        <end position="67"/>
    </location>
</feature>
<feature type="disulfide bond" evidence="4">
    <location>
        <begin position="434"/>
        <end position="446"/>
    </location>
</feature>
<feature type="disulfide bond" evidence="4">
    <location>
        <begin position="441"/>
        <end position="459"/>
    </location>
</feature>
<feature type="disulfide bond" evidence="4">
    <location>
        <begin position="453"/>
        <end position="470"/>
    </location>
</feature>
<feature type="disulfide bond" evidence="4">
    <location>
        <begin position="823"/>
        <end position="837"/>
    </location>
</feature>
<feature type="disulfide bond" evidence="4">
    <location>
        <begin position="831"/>
        <end position="850"/>
    </location>
</feature>
<feature type="disulfide bond" evidence="4">
    <location>
        <begin position="844"/>
        <end position="859"/>
    </location>
</feature>
<feature type="disulfide bond" evidence="4">
    <location>
        <begin position="1050"/>
        <end position="1063"/>
    </location>
</feature>
<feature type="disulfide bond" evidence="4">
    <location>
        <begin position="1057"/>
        <end position="1076"/>
    </location>
</feature>
<feature type="disulfide bond" evidence="4">
    <location>
        <begin position="1070"/>
        <end position="1085"/>
    </location>
</feature>
<feature type="disulfide bond" evidence="4">
    <location>
        <begin position="1264"/>
        <end position="1276"/>
    </location>
</feature>
<feature type="disulfide bond" evidence="4">
    <location>
        <begin position="1271"/>
        <end position="1289"/>
    </location>
</feature>
<feature type="disulfide bond" evidence="4">
    <location>
        <begin position="1283"/>
        <end position="1300"/>
    </location>
</feature>
<feature type="disulfide bond" evidence="4">
    <location>
        <begin position="1483"/>
        <end position="1495"/>
    </location>
</feature>
<feature type="disulfide bond" evidence="4">
    <location>
        <begin position="1490"/>
        <end position="1508"/>
    </location>
</feature>
<feature type="disulfide bond" evidence="4">
    <location>
        <begin position="1502"/>
        <end position="1517"/>
    </location>
</feature>
<feature type="disulfide bond" evidence="4">
    <location>
        <begin position="1684"/>
        <end position="1697"/>
    </location>
</feature>
<feature type="disulfide bond" evidence="4">
    <location>
        <begin position="1692"/>
        <end position="1710"/>
    </location>
</feature>
<feature type="disulfide bond" evidence="4">
    <location>
        <begin position="1704"/>
        <end position="1719"/>
    </location>
</feature>
<feature type="disulfide bond" evidence="4">
    <location>
        <begin position="1903"/>
        <end position="1916"/>
    </location>
</feature>
<feature type="disulfide bond" evidence="4">
    <location>
        <begin position="1910"/>
        <end position="1929"/>
    </location>
</feature>
<feature type="disulfide bond" evidence="4">
    <location>
        <begin position="1923"/>
        <end position="1938"/>
    </location>
</feature>
<feature type="disulfide bond" evidence="4">
    <location>
        <begin position="1947"/>
        <end position="1959"/>
    </location>
</feature>
<feature type="disulfide bond" evidence="4">
    <location>
        <begin position="1954"/>
        <end position="1972"/>
    </location>
</feature>
<feature type="disulfide bond" evidence="4">
    <location>
        <begin position="1966"/>
        <end position="1981"/>
    </location>
</feature>
<feature type="disulfide bond" evidence="4">
    <location>
        <begin position="1986"/>
        <end position="1999"/>
    </location>
</feature>
<feature type="disulfide bond" evidence="4">
    <location>
        <begin position="1993"/>
        <end position="2012"/>
    </location>
</feature>
<feature type="disulfide bond" evidence="4">
    <location>
        <begin position="2006"/>
        <end position="2022"/>
    </location>
</feature>
<feature type="disulfide bond" evidence="3">
    <location>
        <begin position="2025"/>
        <end position="2036"/>
    </location>
</feature>
<feature type="disulfide bond" evidence="3">
    <location>
        <begin position="2030"/>
        <end position="2045"/>
    </location>
</feature>
<feature type="disulfide bond" evidence="3">
    <location>
        <begin position="2047"/>
        <end position="2056"/>
    </location>
</feature>
<feature type="sequence variant" id="VAR_075928" description="In dbSNP:rs16918344." evidence="6">
    <original>A</original>
    <variation>V</variation>
    <location>
        <position position="666"/>
    </location>
</feature>
<feature type="sequence variant" id="VAR_075929" description="In dbSNP:rs4601653." evidence="6">
    <original>D</original>
    <variation>H</variation>
    <location>
        <position position="793"/>
    </location>
</feature>
<feature type="sequence variant" id="VAR_075930" description="In dbSNP:rs2358355." evidence="6">
    <original>S</original>
    <variation>N</variation>
    <location>
        <position position="887"/>
    </location>
</feature>
<feature type="sequence variant" id="VAR_042585" description="In dbSNP:rs7100382.">
    <original>D</original>
    <variation>A</variation>
    <location>
        <position position="1266"/>
    </location>
</feature>
<feature type="sequence variant" id="VAR_042586" description="In dbSNP:rs7100403.">
    <original>I</original>
    <variation>V</variation>
    <location>
        <position position="1277"/>
    </location>
</feature>
<feature type="sequence variant" id="VAR_042587" description="In dbSNP:rs1609746." evidence="6">
    <original>K</original>
    <variation>N</variation>
    <location>
        <position position="1357"/>
    </location>
</feature>
<feature type="sequence variant" id="VAR_042588" description="In dbSNP:rs10827306." evidence="6">
    <original>V</original>
    <variation>A</variation>
    <location>
        <position position="1417"/>
    </location>
</feature>
<feature type="sequence variant" id="VAR_042589" description="In dbSNP:rs12773592.">
    <original>D</original>
    <variation>G</variation>
    <location>
        <position position="1513"/>
    </location>
</feature>
<feature type="sequence variant" id="VAR_042590" description="In dbSNP:rs12771333.">
    <original>E</original>
    <variation>K</variation>
    <location>
        <position position="1516"/>
    </location>
</feature>
<feature type="sequence variant" id="VAR_042592" description="In dbSNP:rs10763975." evidence="6">
    <original>V</original>
    <variation>I</variation>
    <location>
        <position position="1602"/>
    </location>
</feature>
<feature type="sequence variant" id="VAR_042594" description="In dbSNP:rs16918863.">
    <original>L</original>
    <variation>I</variation>
    <location>
        <position position="1683"/>
    </location>
</feature>
<feature type="sequence variant" id="VAR_042595" description="In dbSNP:rs12256835.">
    <original>H</original>
    <variation>Q</variation>
    <location>
        <position position="1721"/>
    </location>
</feature>
<feature type="sequence variant" id="VAR_042596" description="In dbSNP:rs7100661.">
    <original>M</original>
    <variation>T</variation>
    <location>
        <position position="1807"/>
    </location>
</feature>
<feature type="sequence variant" id="VAR_042597" description="In dbSNP:rs16919132.">
    <original>P</original>
    <variation>S</variation>
    <location>
        <position position="1895"/>
    </location>
</feature>
<feature type="sequence variant" id="VAR_042598" description="In dbSNP:rs10827628.">
    <original>S</original>
    <variation>N</variation>
    <location>
        <position position="1941"/>
    </location>
</feature>
<feature type="sequence variant" id="VAR_042599" description="In dbSNP:rs16919148.">
    <original>M</original>
    <variation>R</variation>
    <location>
        <position position="2013"/>
    </location>
</feature>
<gene>
    <name evidence="9" type="primary">MALRD1</name>
    <name evidence="9" type="synonym">C10orf112</name>
    <name evidence="7" type="synonym">DIET1</name>
</gene>
<keyword id="KW-0968">Cytoplasmic vesicle</keyword>
<keyword id="KW-1015">Disulfide bond</keyword>
<keyword id="KW-0245">EGF-like domain</keyword>
<keyword id="KW-0325">Glycoprotein</keyword>
<keyword id="KW-0472">Membrane</keyword>
<keyword id="KW-1267">Proteomics identification</keyword>
<keyword id="KW-1185">Reference proteome</keyword>
<keyword id="KW-0677">Repeat</keyword>
<keyword id="KW-0732">Signal</keyword>
<keyword id="KW-0812">Transmembrane</keyword>
<keyword id="KW-1133">Transmembrane helix</keyword>
<accession>Q5VYJ5</accession>
<accession>B7ZBP2</accession>
<accession>R9WAE9</accession>
<dbReference type="EMBL" id="KC843478">
    <property type="protein sequence ID" value="AGN95661.1"/>
    <property type="molecule type" value="mRNA"/>
</dbReference>
<dbReference type="EMBL" id="AL157895">
    <property type="status" value="NOT_ANNOTATED_CDS"/>
    <property type="molecule type" value="Genomic_DNA"/>
</dbReference>
<dbReference type="EMBL" id="AL353147">
    <property type="status" value="NOT_ANNOTATED_CDS"/>
    <property type="molecule type" value="Genomic_DNA"/>
</dbReference>
<dbReference type="EMBL" id="AL354695">
    <property type="status" value="NOT_ANNOTATED_CDS"/>
    <property type="molecule type" value="Genomic_DNA"/>
</dbReference>
<dbReference type="EMBL" id="AL357520">
    <property type="status" value="NOT_ANNOTATED_CDS"/>
    <property type="molecule type" value="Genomic_DNA"/>
</dbReference>
<dbReference type="EMBL" id="AL391992">
    <property type="status" value="NOT_ANNOTATED_CDS"/>
    <property type="molecule type" value="Genomic_DNA"/>
</dbReference>
<dbReference type="EMBL" id="AL450470">
    <property type="status" value="NOT_ANNOTATED_CDS"/>
    <property type="molecule type" value="Genomic_DNA"/>
</dbReference>
<dbReference type="EMBL" id="AL589943">
    <property type="status" value="NOT_ANNOTATED_CDS"/>
    <property type="molecule type" value="Genomic_DNA"/>
</dbReference>
<dbReference type="EMBL" id="AL590378">
    <property type="status" value="NOT_ANNOTATED_CDS"/>
    <property type="molecule type" value="Genomic_DNA"/>
</dbReference>
<dbReference type="EMBL" id="KF455210">
    <property type="status" value="NOT_ANNOTATED_CDS"/>
    <property type="molecule type" value="Genomic_DNA"/>
</dbReference>
<dbReference type="CCDS" id="CCDS73071.1"/>
<dbReference type="RefSeq" id="NP_001135780.2">
    <property type="nucleotide sequence ID" value="NM_001142308.3"/>
</dbReference>
<dbReference type="SMR" id="Q5VYJ5"/>
<dbReference type="FunCoup" id="Q5VYJ5">
    <property type="interactions" value="248"/>
</dbReference>
<dbReference type="STRING" id="9606.ENSP00000412763"/>
<dbReference type="GlyCosmos" id="Q5VYJ5">
    <property type="glycosylation" value="4 sites, No reported glycans"/>
</dbReference>
<dbReference type="GlyGen" id="Q5VYJ5">
    <property type="glycosylation" value="8 sites, 1 N-linked glycan (1 site), 1 O-linked glycan (1 site)"/>
</dbReference>
<dbReference type="iPTMnet" id="Q5VYJ5"/>
<dbReference type="PhosphoSitePlus" id="Q5VYJ5"/>
<dbReference type="BioMuta" id="MALRD1"/>
<dbReference type="DMDM" id="259016361"/>
<dbReference type="jPOST" id="Q5VYJ5"/>
<dbReference type="MassIVE" id="Q5VYJ5"/>
<dbReference type="PaxDb" id="9606-ENSP00000412763"/>
<dbReference type="PeptideAtlas" id="Q5VYJ5"/>
<dbReference type="ProteomicsDB" id="65634"/>
<dbReference type="Antibodypedia" id="62980">
    <property type="antibodies" value="14 antibodies from 6 providers"/>
</dbReference>
<dbReference type="DNASU" id="340895"/>
<dbReference type="Ensembl" id="ENST00000454679.7">
    <property type="protein sequence ID" value="ENSP00000412763.3"/>
    <property type="gene ID" value="ENSG00000204740.11"/>
</dbReference>
<dbReference type="GeneID" id="340895"/>
<dbReference type="KEGG" id="hsa:340895"/>
<dbReference type="MANE-Select" id="ENST00000454679.7">
    <property type="protein sequence ID" value="ENSP00000412763.3"/>
    <property type="RefSeq nucleotide sequence ID" value="NM_001142308.3"/>
    <property type="RefSeq protein sequence ID" value="NP_001135780.2"/>
</dbReference>
<dbReference type="UCSC" id="uc031vyw.1">
    <property type="organism name" value="human"/>
</dbReference>
<dbReference type="AGR" id="HGNC:24331"/>
<dbReference type="CTD" id="340895"/>
<dbReference type="DisGeNET" id="340895"/>
<dbReference type="GeneCards" id="MALRD1"/>
<dbReference type="HGNC" id="HGNC:24331">
    <property type="gene designation" value="MALRD1"/>
</dbReference>
<dbReference type="HPA" id="ENSG00000204740">
    <property type="expression patterns" value="Tissue enriched (intestine)"/>
</dbReference>
<dbReference type="MIM" id="617715">
    <property type="type" value="gene"/>
</dbReference>
<dbReference type="neXtProt" id="NX_Q5VYJ5"/>
<dbReference type="OpenTargets" id="ENSG00000204740"/>
<dbReference type="VEuPathDB" id="HostDB:ENSG00000204740"/>
<dbReference type="eggNOG" id="KOG1095">
    <property type="taxonomic scope" value="Eukaryota"/>
</dbReference>
<dbReference type="GeneTree" id="ENSGT00940000158809"/>
<dbReference type="HOGENOM" id="CLU_002270_0_0_1"/>
<dbReference type="InParanoid" id="Q5VYJ5"/>
<dbReference type="OMA" id="HLVCDNK"/>
<dbReference type="OrthoDB" id="412155at2759"/>
<dbReference type="PAN-GO" id="Q5VYJ5">
    <property type="GO annotations" value="1 GO annotation based on evolutionary models"/>
</dbReference>
<dbReference type="TreeFam" id="TF343455"/>
<dbReference type="PathwayCommons" id="Q5VYJ5"/>
<dbReference type="BioGRID-ORCS" id="340895">
    <property type="hits" value="2 hits in 225 CRISPR screens"/>
</dbReference>
<dbReference type="ChiTaRS" id="MALRD1">
    <property type="organism name" value="human"/>
</dbReference>
<dbReference type="GenomeRNAi" id="340895"/>
<dbReference type="Pharos" id="Q5VYJ5">
    <property type="development level" value="Tbio"/>
</dbReference>
<dbReference type="PRO" id="PR:Q5VYJ5"/>
<dbReference type="Proteomes" id="UP000005640">
    <property type="component" value="Chromosome 10"/>
</dbReference>
<dbReference type="RNAct" id="Q5VYJ5">
    <property type="molecule type" value="protein"/>
</dbReference>
<dbReference type="Bgee" id="ENSG00000204740">
    <property type="expression patterns" value="Expressed in ileal mucosa and 105 other cell types or tissues"/>
</dbReference>
<dbReference type="ExpressionAtlas" id="Q5VYJ5">
    <property type="expression patterns" value="baseline and differential"/>
</dbReference>
<dbReference type="GO" id="GO:0030659">
    <property type="term" value="C:cytoplasmic vesicle membrane"/>
    <property type="evidence" value="ECO:0007669"/>
    <property type="project" value="UniProtKB-SubCell"/>
</dbReference>
<dbReference type="GO" id="GO:0005794">
    <property type="term" value="C:Golgi apparatus"/>
    <property type="evidence" value="ECO:0000314"/>
    <property type="project" value="HPA"/>
</dbReference>
<dbReference type="GO" id="GO:0042632">
    <property type="term" value="P:cholesterol homeostasis"/>
    <property type="evidence" value="ECO:0007669"/>
    <property type="project" value="Ensembl"/>
</dbReference>
<dbReference type="GO" id="GO:0070858">
    <property type="term" value="P:negative regulation of bile acid biosynthetic process"/>
    <property type="evidence" value="ECO:0007669"/>
    <property type="project" value="Ensembl"/>
</dbReference>
<dbReference type="CDD" id="cd00054">
    <property type="entry name" value="EGF_CA"/>
    <property type="match status" value="1"/>
</dbReference>
<dbReference type="CDD" id="cd00112">
    <property type="entry name" value="LDLa"/>
    <property type="match status" value="10"/>
</dbReference>
<dbReference type="CDD" id="cd06263">
    <property type="entry name" value="MAM"/>
    <property type="match status" value="8"/>
</dbReference>
<dbReference type="FunFam" id="4.10.400.10:FF:000129">
    <property type="entry name" value="Complement factor I"/>
    <property type="match status" value="1"/>
</dbReference>
<dbReference type="FunFam" id="4.10.400.10:FF:000135">
    <property type="entry name" value="LDL receptor protein 1, isoform G"/>
    <property type="match status" value="1"/>
</dbReference>
<dbReference type="FunFam" id="2.60.120.200:FF:000232">
    <property type="entry name" value="MAM and LDL receptor class A domain containing 1"/>
    <property type="match status" value="1"/>
</dbReference>
<dbReference type="FunFam" id="2.60.120.200:FF:000240">
    <property type="entry name" value="MAM and LDL receptor class A domain containing 1"/>
    <property type="match status" value="1"/>
</dbReference>
<dbReference type="FunFam" id="2.60.120.200:FF:000191">
    <property type="entry name" value="MAM and LDL receptor class A domain-containing 1"/>
    <property type="match status" value="1"/>
</dbReference>
<dbReference type="FunFam" id="2.60.120.200:FF:000205">
    <property type="entry name" value="MAM and LDL receptor class A domain-containing 1"/>
    <property type="match status" value="1"/>
</dbReference>
<dbReference type="FunFam" id="2.60.120.200:FF:000225">
    <property type="entry name" value="MAM and LDL receptor class A domain-containing 1"/>
    <property type="match status" value="1"/>
</dbReference>
<dbReference type="FunFam" id="4.10.400.10:FF:000142">
    <property type="entry name" value="MAM and LDL receptor class A domain-containing 1"/>
    <property type="match status" value="2"/>
</dbReference>
<dbReference type="FunFam" id="2.10.25.10:FF:000975">
    <property type="entry name" value="MAM and LDL-receptor class A domain-containing protein 1"/>
    <property type="match status" value="1"/>
</dbReference>
<dbReference type="FunFam" id="2.60.120.200:FF:000182">
    <property type="entry name" value="MAM and LDL-receptor class A domain-containing protein 1"/>
    <property type="match status" value="1"/>
</dbReference>
<dbReference type="FunFam" id="2.60.120.200:FF:000206">
    <property type="entry name" value="MAM and LDL-receptor class A domain-containing protein 1"/>
    <property type="match status" value="1"/>
</dbReference>
<dbReference type="FunFam" id="2.60.120.200:FF:000254">
    <property type="entry name" value="MAM and LDL-receptor class A domain-containing protein 1"/>
    <property type="match status" value="1"/>
</dbReference>
<dbReference type="FunFam" id="2.60.120.200:FF:000297">
    <property type="entry name" value="MAM and LDL-receptor class A domain-containing protein 1"/>
    <property type="match status" value="1"/>
</dbReference>
<dbReference type="FunFam" id="4.10.400.10:FF:000182">
    <property type="entry name" value="MAM and LDL-receptor class A domain-containing protein 1"/>
    <property type="match status" value="1"/>
</dbReference>
<dbReference type="FunFam" id="4.10.400.10:FF:000186">
    <property type="entry name" value="MAM and LDL-receptor class A domain-containing protein 1"/>
    <property type="match status" value="1"/>
</dbReference>
<dbReference type="FunFam" id="4.10.400.10:FF:000067">
    <property type="entry name" value="Serine peptidase inhibitor, Kunitz type 1"/>
    <property type="match status" value="1"/>
</dbReference>
<dbReference type="Gene3D" id="2.60.120.200">
    <property type="match status" value="9"/>
</dbReference>
<dbReference type="Gene3D" id="2.10.25.10">
    <property type="entry name" value="Laminin"/>
    <property type="match status" value="1"/>
</dbReference>
<dbReference type="Gene3D" id="4.10.400.10">
    <property type="entry name" value="Low-density Lipoprotein Receptor"/>
    <property type="match status" value="10"/>
</dbReference>
<dbReference type="InterPro" id="IPR013320">
    <property type="entry name" value="ConA-like_dom_sf"/>
</dbReference>
<dbReference type="InterPro" id="IPR000742">
    <property type="entry name" value="EGF-like_dom"/>
</dbReference>
<dbReference type="InterPro" id="IPR036055">
    <property type="entry name" value="LDL_receptor-like_sf"/>
</dbReference>
<dbReference type="InterPro" id="IPR023415">
    <property type="entry name" value="LDLR_class-A_CS"/>
</dbReference>
<dbReference type="InterPro" id="IPR002172">
    <property type="entry name" value="LDrepeatLR_classA_rpt"/>
</dbReference>
<dbReference type="InterPro" id="IPR000998">
    <property type="entry name" value="MAM_dom"/>
</dbReference>
<dbReference type="InterPro" id="IPR051560">
    <property type="entry name" value="MAM_domain-containing"/>
</dbReference>
<dbReference type="PANTHER" id="PTHR23282">
    <property type="entry name" value="APICAL ENDOSOMAL GLYCOPROTEIN PRECURSOR"/>
    <property type="match status" value="1"/>
</dbReference>
<dbReference type="PANTHER" id="PTHR23282:SF101">
    <property type="entry name" value="MAM DOMAIN-CONTAINING PROTEIN"/>
    <property type="match status" value="1"/>
</dbReference>
<dbReference type="Pfam" id="PF00008">
    <property type="entry name" value="EGF"/>
    <property type="match status" value="1"/>
</dbReference>
<dbReference type="Pfam" id="PF00057">
    <property type="entry name" value="Ldl_recept_a"/>
    <property type="match status" value="6"/>
</dbReference>
<dbReference type="Pfam" id="PF00629">
    <property type="entry name" value="MAM"/>
    <property type="match status" value="9"/>
</dbReference>
<dbReference type="PRINTS" id="PR00261">
    <property type="entry name" value="LDLRECEPTOR"/>
</dbReference>
<dbReference type="PRINTS" id="PR00020">
    <property type="entry name" value="MAMDOMAIN"/>
</dbReference>
<dbReference type="SMART" id="SM00181">
    <property type="entry name" value="EGF"/>
    <property type="match status" value="1"/>
</dbReference>
<dbReference type="SMART" id="SM00192">
    <property type="entry name" value="LDLa"/>
    <property type="match status" value="10"/>
</dbReference>
<dbReference type="SMART" id="SM00137">
    <property type="entry name" value="MAM"/>
    <property type="match status" value="9"/>
</dbReference>
<dbReference type="SUPFAM" id="SSF49899">
    <property type="entry name" value="Concanavalin A-like lectins/glucanases"/>
    <property type="match status" value="9"/>
</dbReference>
<dbReference type="SUPFAM" id="SSF57196">
    <property type="entry name" value="EGF/Laminin"/>
    <property type="match status" value="1"/>
</dbReference>
<dbReference type="SUPFAM" id="SSF57424">
    <property type="entry name" value="LDL receptor-like module"/>
    <property type="match status" value="10"/>
</dbReference>
<dbReference type="PROSITE" id="PS00022">
    <property type="entry name" value="EGF_1"/>
    <property type="match status" value="1"/>
</dbReference>
<dbReference type="PROSITE" id="PS01186">
    <property type="entry name" value="EGF_2"/>
    <property type="match status" value="1"/>
</dbReference>
<dbReference type="PROSITE" id="PS50026">
    <property type="entry name" value="EGF_3"/>
    <property type="match status" value="1"/>
</dbReference>
<dbReference type="PROSITE" id="PS01209">
    <property type="entry name" value="LDLRA_1"/>
    <property type="match status" value="7"/>
</dbReference>
<dbReference type="PROSITE" id="PS50068">
    <property type="entry name" value="LDLRA_2"/>
    <property type="match status" value="10"/>
</dbReference>
<dbReference type="PROSITE" id="PS50060">
    <property type="entry name" value="MAM_2"/>
    <property type="match status" value="9"/>
</dbReference>
<proteinExistence type="evidence at protein level"/>
<name>MALR1_HUMAN</name>
<protein>
    <recommendedName>
        <fullName evidence="9">MAM and LDL-receptor class A domain-containing protein 1</fullName>
    </recommendedName>
</protein>
<reference key="1">
    <citation type="journal article" date="2013" name="Cell Metab.">
        <title>Diet1 functions in the FGF15/19 enterohepatic signaling axis to modulate bile acid and lipid levels.</title>
        <authorList>
            <person name="Vergnes L."/>
            <person name="Lee J.M."/>
            <person name="Chin R.G."/>
            <person name="Auwerx J."/>
            <person name="Reue K."/>
        </authorList>
    </citation>
    <scope>NUCLEOTIDE SEQUENCE [MRNA]</scope>
    <scope>FUNCTION</scope>
    <scope>INTERACTION WITH FGF19</scope>
    <scope>TISSUE SPECIFICITY</scope>
    <scope>VARIANTS VAL-666; HIS-793; ASN-887; ASN-1357; ALA-1417 AND ILE-1602</scope>
</reference>
<reference key="2">
    <citation type="journal article" date="2004" name="Nature">
        <title>The DNA sequence and comparative analysis of human chromosome 10.</title>
        <authorList>
            <person name="Deloukas P."/>
            <person name="Earthrowl M.E."/>
            <person name="Grafham D.V."/>
            <person name="Rubenfield M."/>
            <person name="French L."/>
            <person name="Steward C.A."/>
            <person name="Sims S.K."/>
            <person name="Jones M.C."/>
            <person name="Searle S."/>
            <person name="Scott C."/>
            <person name="Howe K."/>
            <person name="Hunt S.E."/>
            <person name="Andrews T.D."/>
            <person name="Gilbert J.G.R."/>
            <person name="Swarbreck D."/>
            <person name="Ashurst J.L."/>
            <person name="Taylor A."/>
            <person name="Battles J."/>
            <person name="Bird C.P."/>
            <person name="Ainscough R."/>
            <person name="Almeida J.P."/>
            <person name="Ashwell R.I.S."/>
            <person name="Ambrose K.D."/>
            <person name="Babbage A.K."/>
            <person name="Bagguley C.L."/>
            <person name="Bailey J."/>
            <person name="Banerjee R."/>
            <person name="Bates K."/>
            <person name="Beasley H."/>
            <person name="Bray-Allen S."/>
            <person name="Brown A.J."/>
            <person name="Brown J.Y."/>
            <person name="Burford D.C."/>
            <person name="Burrill W."/>
            <person name="Burton J."/>
            <person name="Cahill P."/>
            <person name="Camire D."/>
            <person name="Carter N.P."/>
            <person name="Chapman J.C."/>
            <person name="Clark S.Y."/>
            <person name="Clarke G."/>
            <person name="Clee C.M."/>
            <person name="Clegg S."/>
            <person name="Corby N."/>
            <person name="Coulson A."/>
            <person name="Dhami P."/>
            <person name="Dutta I."/>
            <person name="Dunn M."/>
            <person name="Faulkner L."/>
            <person name="Frankish A."/>
            <person name="Frankland J.A."/>
            <person name="Garner P."/>
            <person name="Garnett J."/>
            <person name="Gribble S."/>
            <person name="Griffiths C."/>
            <person name="Grocock R."/>
            <person name="Gustafson E."/>
            <person name="Hammond S."/>
            <person name="Harley J.L."/>
            <person name="Hart E."/>
            <person name="Heath P.D."/>
            <person name="Ho T.P."/>
            <person name="Hopkins B."/>
            <person name="Horne J."/>
            <person name="Howden P.J."/>
            <person name="Huckle E."/>
            <person name="Hynds C."/>
            <person name="Johnson C."/>
            <person name="Johnson D."/>
            <person name="Kana A."/>
            <person name="Kay M."/>
            <person name="Kimberley A.M."/>
            <person name="Kershaw J.K."/>
            <person name="Kokkinaki M."/>
            <person name="Laird G.K."/>
            <person name="Lawlor S."/>
            <person name="Lee H.M."/>
            <person name="Leongamornlert D.A."/>
            <person name="Laird G."/>
            <person name="Lloyd C."/>
            <person name="Lloyd D.M."/>
            <person name="Loveland J."/>
            <person name="Lovell J."/>
            <person name="McLaren S."/>
            <person name="McLay K.E."/>
            <person name="McMurray A."/>
            <person name="Mashreghi-Mohammadi M."/>
            <person name="Matthews L."/>
            <person name="Milne S."/>
            <person name="Nickerson T."/>
            <person name="Nguyen M."/>
            <person name="Overton-Larty E."/>
            <person name="Palmer S.A."/>
            <person name="Pearce A.V."/>
            <person name="Peck A.I."/>
            <person name="Pelan S."/>
            <person name="Phillimore B."/>
            <person name="Porter K."/>
            <person name="Rice C.M."/>
            <person name="Rogosin A."/>
            <person name="Ross M.T."/>
            <person name="Sarafidou T."/>
            <person name="Sehra H.K."/>
            <person name="Shownkeen R."/>
            <person name="Skuce C.D."/>
            <person name="Smith M."/>
            <person name="Standring L."/>
            <person name="Sycamore N."/>
            <person name="Tester J."/>
            <person name="Thorpe A."/>
            <person name="Torcasso W."/>
            <person name="Tracey A."/>
            <person name="Tromans A."/>
            <person name="Tsolas J."/>
            <person name="Wall M."/>
            <person name="Walsh J."/>
            <person name="Wang H."/>
            <person name="Weinstock K."/>
            <person name="West A.P."/>
            <person name="Willey D.L."/>
            <person name="Whitehead S.L."/>
            <person name="Wilming L."/>
            <person name="Wray P.W."/>
            <person name="Young L."/>
            <person name="Chen Y."/>
            <person name="Lovering R.C."/>
            <person name="Moschonas N.K."/>
            <person name="Siebert R."/>
            <person name="Fechtel K."/>
            <person name="Bentley D."/>
            <person name="Durbin R.M."/>
            <person name="Hubbard T."/>
            <person name="Doucette-Stamm L."/>
            <person name="Beck S."/>
            <person name="Smith D.R."/>
            <person name="Rogers J."/>
        </authorList>
    </citation>
    <scope>NUCLEOTIDE SEQUENCE [LARGE SCALE GENOMIC DNA]</scope>
</reference>
<evidence type="ECO:0000250" key="1">
    <source>
        <dbReference type="UniProtKB" id="A2AJX4"/>
    </source>
</evidence>
<evidence type="ECO:0000255" key="2"/>
<evidence type="ECO:0000255" key="3">
    <source>
        <dbReference type="PROSITE-ProRule" id="PRU00076"/>
    </source>
</evidence>
<evidence type="ECO:0000255" key="4">
    <source>
        <dbReference type="PROSITE-ProRule" id="PRU00124"/>
    </source>
</evidence>
<evidence type="ECO:0000255" key="5">
    <source>
        <dbReference type="PROSITE-ProRule" id="PRU00128"/>
    </source>
</evidence>
<evidence type="ECO:0000269" key="6">
    <source>
    </source>
</evidence>
<evidence type="ECO:0000303" key="7">
    <source>
    </source>
</evidence>
<evidence type="ECO:0000305" key="8"/>
<evidence type="ECO:0000312" key="9">
    <source>
        <dbReference type="HGNC" id="HGNC:24331"/>
    </source>
</evidence>
<comment type="function">
    <text evidence="6">Enhances production and/or transport of FGF19 and thus has a role in regulation of bile acid synthesis.</text>
</comment>
<comment type="subunit">
    <text evidence="6">Interacts with FGF19.</text>
</comment>
<comment type="subcellular location">
    <subcellularLocation>
        <location evidence="1">Cytoplasmic vesicle membrane</location>
        <topology evidence="2">Single-pass type I membrane protein</topology>
    </subcellularLocation>
</comment>
<comment type="tissue specificity">
    <text evidence="6">Strongly expressed in the small intestine.</text>
</comment>
<organism>
    <name type="scientific">Homo sapiens</name>
    <name type="common">Human</name>
    <dbReference type="NCBI Taxonomy" id="9606"/>
    <lineage>
        <taxon>Eukaryota</taxon>
        <taxon>Metazoa</taxon>
        <taxon>Chordata</taxon>
        <taxon>Craniata</taxon>
        <taxon>Vertebrata</taxon>
        <taxon>Euteleostomi</taxon>
        <taxon>Mammalia</taxon>
        <taxon>Eutheria</taxon>
        <taxon>Euarchontoglires</taxon>
        <taxon>Primates</taxon>
        <taxon>Haplorrhini</taxon>
        <taxon>Catarrhini</taxon>
        <taxon>Hominidae</taxon>
        <taxon>Homo</taxon>
    </lineage>
</organism>
<sequence length="2156" mass="241008">MLFFLDRMLAFPMNETFCCLWIACVFNSTLAQQGTESFQCDNGVSLPPDSICDFTDQCGDSSDERHCLNYERCDFEDGLCHMTQDQSLQPSWTKRSGMIGLSPPFYDHNGDVSAHFLSLVSRVDSISSSLRSRVFLPTNDQHDCQITFYYFSCQVSGKLMVGLQTACGGPIQHLWQNTAALPNQWERNVIKIQSSQRFQVVFEGQMASTYEQDEVIAIDDISFSSGCLPANDGILLCQEALNAERELCHPDTDLCRFDATDEELRLCQACGFEFDMCEWTSEASAGQISWMRTKAREIPAFESTPQQDQGGDDEGYYVWVGAKHGFTLNHLDSRAYLNSSVCHCLGKSCHLQFYYAMESSVLRVRLYNNKEEEIFWTYNISTHSQWVKADVLIPEDLKTFKIIFEGTLLSQRSFIALDHLWVYACGQTQSRKLCSADEFPCTSGQCIAKESVCDSRQDCSDESDEDPATCSKHLTCDFESGFCGWEPFLTEDSHWKLMKGLNNGEHHFPAADHTANINHGSFIYLEAQRSPGVAKLGSPVLTKLLTASTPCQVQFWYHLSQHSNLSVFTRTSLDGNLQKQGKIIRFSESQWSHAKIDLIAEAGESTLPFQLILEATVLSSNATVALDDISVSQECEISYKSLPRTSTQSKFSKCDFEANSCDWFEAISGDHFDWIRSSQSELSADFEHQAPPRDHSLNASQGHFMFILKKSSSLWQVAKLQSPTFSQTGPGCILSFWFYNYGLSVGAAELQLHMENSHDSTVIWRVLYNQGKQWLEATIQLGRLSQPFHLSLDKVSLGIYDGVSAIDDIRFENCTLPLPAESCEGLDHFWCRHTRACIEKLRLCDLVDDCGDRTDEVNCAPELQCNFETGICNWEQDAKDDFDWTRSQGPTPTLNTGPMKDNTLGTAKGHYLYIESSEPQAFQDSAALLSPILNATDTKGCTFRFYYHMFGKRIYRLAIYQRIWSDSRGQLLWQIFGNQGNRWIRKHLNISSRQPFQILVEASVGDGFTGDIAIDDLSFMDCTLYPGNLPADLPTPPETSVPVTLPPHNCTDNEFICRSDGHCIEKMQKCDFKYDCPDKSDEASCVMEVCSFEKRSLCKWYQPIPVHLLQDSNTFRWGLGNGISIHHGEENHRPSVDHTQNTTDGWYLYADSSNGKFGDTADILTPIISLTGPKCTLVFWTHMNGATVGSLQVLIKKDNVTSKLWAQTGQQGAQWKRAEVFLGIRSHTQIVFRAKRGISYIGDVAVDDISFQDCSPLLSPERKCTDHEFMCANKHCIAKDKLCDFVNDCADNSDETTFICRTSSGRCDFEFDLCSWKQEKDEDFDWNLKASSIPAAGTEPAADHTLGNSSGHYIFIKSLFPQQPMRAARISSPVISKRSKNCKIIFHYHMYGNGIGALTLMQVSVTNQTKVLLNLTVEQGNFWRREELSLFGDEDFQLKFEGRVGKGQRGDIALDDIVLTENCLSLHDSVQEELAVPLPTGFCPLGYRECHNGKCYRLEQSCNFVDNCGDNTDENECGSSCTFEKGWCGWQNSQADNFDWVLGVGSHQSLRPPKDHTLGNENGHFMYLEATAVGLRGDKAHFRSTMWRESSAACTMSFWYFVSAKATGSIQILIKTEKGLSKVWQESKQNPGNHWQKADILLGKLRNFEVIFQGIRTRDLGGGAAIDDIEFKNCTTVGEISELCPEITDFLCRDKKCIASHLLCDYKPDCSDRSDEAHCAHYTSTTGSCNFETSSGNWTTACSLTQDSEDDLDWAIGSRIPAKALIPDSDHTPGSGQHFLYVNSSGSKEGSVARITTSKSFPASLGMCTVRFWFYMIDPRSMGILKVYTIEESGLNILVWSVIGNKRTGWTYGSVPLSSNSPFKVAFEADLDGNEDIFIALDDISFTPECVTGGPVPVQPSPCEADQFSCIYTLQCVPLSGKCDGHEDCIDGSDEMDCPLSPTPPLCSNMEFPCSTDECIPSLLLCDGVPDCHFNEDELICSNKSCSNGALVCASSNSCIPAHQRCDGFADCMDFQLDESSCSECPLNYCRNGGTCVVEKNGPMCRCRQGWKGNRCHIKFNPPATDFTYAQNNTWTLLGIGLAFLMTHITVAVLCFLANRKVPIRKTEGSGNCAFVNPVYGNWSNPEKTESSVYSFSNPLYGTTSGSLETLSHHLK</sequence>